<name>ISCR_ALISL</name>
<reference key="1">
    <citation type="journal article" date="2008" name="BMC Genomics">
        <title>The genome sequence of the fish pathogen Aliivibrio salmonicida strain LFI1238 shows extensive evidence of gene decay.</title>
        <authorList>
            <person name="Hjerde E."/>
            <person name="Lorentzen M.S."/>
            <person name="Holden M.T."/>
            <person name="Seeger K."/>
            <person name="Paulsen S."/>
            <person name="Bason N."/>
            <person name="Churcher C."/>
            <person name="Harris D."/>
            <person name="Norbertczak H."/>
            <person name="Quail M.A."/>
            <person name="Sanders S."/>
            <person name="Thurston S."/>
            <person name="Parkhill J."/>
            <person name="Willassen N.P."/>
            <person name="Thomson N.R."/>
        </authorList>
    </citation>
    <scope>NUCLEOTIDE SEQUENCE [LARGE SCALE GENOMIC DNA]</scope>
    <source>
        <strain>LFI1238</strain>
    </source>
</reference>
<sequence length="168" mass="17959">MKLTSKGRYAVTAMLDVALHAQEGPVPLADISERQGISLSYLEQLFSKLRKAGLVASVRGPGGGYRLGLKPDEIAVGMVISAVDESVDATKCHGKEGCQGGTRCLTHTLWRDLSSRISSFLDGISLGELMVDNEVQQVSDRQNIDAALNNGLVTNSKLTNSVGVNVRF</sequence>
<comment type="function">
    <text evidence="1">Regulates the transcription of several operons and genes involved in the biogenesis of Fe-S clusters and Fe-S-containing proteins.</text>
</comment>
<comment type="cofactor">
    <cofactor evidence="1">
        <name>[2Fe-2S] cluster</name>
        <dbReference type="ChEBI" id="CHEBI:190135"/>
    </cofactor>
    <text evidence="1">Binds 1 [2Fe-2S] cluster.</text>
</comment>
<feature type="chain" id="PRO_1000138092" description="HTH-type transcriptional regulator IscR">
    <location>
        <begin position="1"/>
        <end position="168"/>
    </location>
</feature>
<feature type="domain" description="HTH rrf2-type" evidence="1">
    <location>
        <begin position="2"/>
        <end position="131"/>
    </location>
</feature>
<feature type="DNA-binding region" description="H-T-H motif" evidence="1">
    <location>
        <begin position="28"/>
        <end position="51"/>
    </location>
</feature>
<feature type="binding site" evidence="1">
    <location>
        <position position="92"/>
    </location>
    <ligand>
        <name>[2Fe-2S] cluster</name>
        <dbReference type="ChEBI" id="CHEBI:190135"/>
    </ligand>
</feature>
<feature type="binding site" evidence="1">
    <location>
        <position position="98"/>
    </location>
    <ligand>
        <name>[2Fe-2S] cluster</name>
        <dbReference type="ChEBI" id="CHEBI:190135"/>
    </ligand>
</feature>
<feature type="binding site" evidence="1">
    <location>
        <position position="104"/>
    </location>
    <ligand>
        <name>[2Fe-2S] cluster</name>
        <dbReference type="ChEBI" id="CHEBI:190135"/>
    </ligand>
</feature>
<keyword id="KW-0001">2Fe-2S</keyword>
<keyword id="KW-0010">Activator</keyword>
<keyword id="KW-0238">DNA-binding</keyword>
<keyword id="KW-0408">Iron</keyword>
<keyword id="KW-0411">Iron-sulfur</keyword>
<keyword id="KW-0479">Metal-binding</keyword>
<keyword id="KW-0678">Repressor</keyword>
<keyword id="KW-0804">Transcription</keyword>
<keyword id="KW-0805">Transcription regulation</keyword>
<organism>
    <name type="scientific">Aliivibrio salmonicida (strain LFI1238)</name>
    <name type="common">Vibrio salmonicida (strain LFI1238)</name>
    <dbReference type="NCBI Taxonomy" id="316275"/>
    <lineage>
        <taxon>Bacteria</taxon>
        <taxon>Pseudomonadati</taxon>
        <taxon>Pseudomonadota</taxon>
        <taxon>Gammaproteobacteria</taxon>
        <taxon>Vibrionales</taxon>
        <taxon>Vibrionaceae</taxon>
        <taxon>Aliivibrio</taxon>
    </lineage>
</organism>
<gene>
    <name evidence="1" type="primary">iscR</name>
    <name type="ordered locus">VSAL_I0716</name>
</gene>
<proteinExistence type="inferred from homology"/>
<protein>
    <recommendedName>
        <fullName evidence="1">HTH-type transcriptional regulator IscR</fullName>
    </recommendedName>
</protein>
<evidence type="ECO:0000255" key="1">
    <source>
        <dbReference type="HAMAP-Rule" id="MF_01176"/>
    </source>
</evidence>
<dbReference type="EMBL" id="FM178379">
    <property type="protein sequence ID" value="CAQ78401.1"/>
    <property type="molecule type" value="Genomic_DNA"/>
</dbReference>
<dbReference type="RefSeq" id="WP_012549521.1">
    <property type="nucleotide sequence ID" value="NC_011312.1"/>
</dbReference>
<dbReference type="SMR" id="B6EGX4"/>
<dbReference type="KEGG" id="vsa:VSAL_I0716"/>
<dbReference type="eggNOG" id="COG1959">
    <property type="taxonomic scope" value="Bacteria"/>
</dbReference>
<dbReference type="HOGENOM" id="CLU_107144_0_0_6"/>
<dbReference type="Proteomes" id="UP000001730">
    <property type="component" value="Chromosome 1"/>
</dbReference>
<dbReference type="GO" id="GO:0005829">
    <property type="term" value="C:cytosol"/>
    <property type="evidence" value="ECO:0007669"/>
    <property type="project" value="TreeGrafter"/>
</dbReference>
<dbReference type="GO" id="GO:0051537">
    <property type="term" value="F:2 iron, 2 sulfur cluster binding"/>
    <property type="evidence" value="ECO:0007669"/>
    <property type="project" value="UniProtKB-KW"/>
</dbReference>
<dbReference type="GO" id="GO:0003700">
    <property type="term" value="F:DNA-binding transcription factor activity"/>
    <property type="evidence" value="ECO:0007669"/>
    <property type="project" value="UniProtKB-UniRule"/>
</dbReference>
<dbReference type="GO" id="GO:0003690">
    <property type="term" value="F:double-stranded DNA binding"/>
    <property type="evidence" value="ECO:0007669"/>
    <property type="project" value="UniProtKB-UniRule"/>
</dbReference>
<dbReference type="GO" id="GO:0005506">
    <property type="term" value="F:iron ion binding"/>
    <property type="evidence" value="ECO:0007669"/>
    <property type="project" value="UniProtKB-UniRule"/>
</dbReference>
<dbReference type="CDD" id="cd00090">
    <property type="entry name" value="HTH_ARSR"/>
    <property type="match status" value="1"/>
</dbReference>
<dbReference type="FunFam" id="1.10.10.10:FF:000026">
    <property type="entry name" value="HTH-type transcriptional regulator IscR"/>
    <property type="match status" value="1"/>
</dbReference>
<dbReference type="Gene3D" id="1.10.10.10">
    <property type="entry name" value="Winged helix-like DNA-binding domain superfamily/Winged helix DNA-binding domain"/>
    <property type="match status" value="1"/>
</dbReference>
<dbReference type="HAMAP" id="MF_01176">
    <property type="entry name" value="HTH_type_IscR"/>
    <property type="match status" value="1"/>
</dbReference>
<dbReference type="InterPro" id="IPR011991">
    <property type="entry name" value="ArsR-like_HTH"/>
</dbReference>
<dbReference type="InterPro" id="IPR010242">
    <property type="entry name" value="TF_HTH_IscR"/>
</dbReference>
<dbReference type="InterPro" id="IPR030489">
    <property type="entry name" value="TR_Rrf2-type_CS"/>
</dbReference>
<dbReference type="InterPro" id="IPR000944">
    <property type="entry name" value="Tscrpt_reg_Rrf2"/>
</dbReference>
<dbReference type="InterPro" id="IPR036388">
    <property type="entry name" value="WH-like_DNA-bd_sf"/>
</dbReference>
<dbReference type="InterPro" id="IPR036390">
    <property type="entry name" value="WH_DNA-bd_sf"/>
</dbReference>
<dbReference type="NCBIfam" id="TIGR02010">
    <property type="entry name" value="IscR"/>
    <property type="match status" value="1"/>
</dbReference>
<dbReference type="NCBIfam" id="TIGR00738">
    <property type="entry name" value="rrf2_super"/>
    <property type="match status" value="1"/>
</dbReference>
<dbReference type="PANTHER" id="PTHR33221:SF5">
    <property type="entry name" value="HTH-TYPE TRANSCRIPTIONAL REGULATOR ISCR"/>
    <property type="match status" value="1"/>
</dbReference>
<dbReference type="PANTHER" id="PTHR33221">
    <property type="entry name" value="WINGED HELIX-TURN-HELIX TRANSCRIPTIONAL REGULATOR, RRF2 FAMILY"/>
    <property type="match status" value="1"/>
</dbReference>
<dbReference type="Pfam" id="PF02082">
    <property type="entry name" value="Rrf2"/>
    <property type="match status" value="1"/>
</dbReference>
<dbReference type="SUPFAM" id="SSF46785">
    <property type="entry name" value="Winged helix' DNA-binding domain"/>
    <property type="match status" value="1"/>
</dbReference>
<dbReference type="PROSITE" id="PS01332">
    <property type="entry name" value="HTH_RRF2_1"/>
    <property type="match status" value="1"/>
</dbReference>
<dbReference type="PROSITE" id="PS51197">
    <property type="entry name" value="HTH_RRF2_2"/>
    <property type="match status" value="1"/>
</dbReference>
<accession>B6EGX4</accession>